<reference key="1">
    <citation type="journal article" date="2009" name="Proc. Natl. Acad. Sci. U.S.A.">
        <title>The genomic basis of trophic strategy in marine bacteria.</title>
        <authorList>
            <person name="Lauro F.M."/>
            <person name="McDougald D."/>
            <person name="Thomas T."/>
            <person name="Williams T.J."/>
            <person name="Egan S."/>
            <person name="Rice S."/>
            <person name="DeMaere M.Z."/>
            <person name="Ting L."/>
            <person name="Ertan H."/>
            <person name="Johnson J."/>
            <person name="Ferriera S."/>
            <person name="Lapidus A."/>
            <person name="Anderson I."/>
            <person name="Kyrpides N."/>
            <person name="Munk A.C."/>
            <person name="Detter C."/>
            <person name="Han C.S."/>
            <person name="Brown M.V."/>
            <person name="Robb F.T."/>
            <person name="Kjelleberg S."/>
            <person name="Cavicchioli R."/>
        </authorList>
    </citation>
    <scope>NUCLEOTIDE SEQUENCE [LARGE SCALE GENOMIC DNA]</scope>
    <source>
        <strain>DSM 13593 / LMG 18877 / RB2256</strain>
    </source>
</reference>
<gene>
    <name evidence="1" type="primary">hemC</name>
    <name type="ordered locus">Sala_2876</name>
</gene>
<sequence length="315" mass="32849">MNELATPDNPLRIGTRASPLAMAQAHMAAAALIAAHGLAMAALEIVPMTATGDRIQDRALAEVGGKALWTRELDAALDAGTIDVAVHSLKDVETLRDARFFLGAMLERADPRDRLVVREGIAAQKISELPHGARLGTSSPRRAAQVRRLRPDLDTVLLRGNVATRLAKLAAGEADATLLAAAGLERLGMHDIGAVQGTELLLPAASQGAIGIECRADDAATIALLAAIDHAPTHRAVAAERALLAVLGGDCRSPVAAYAEWQADGVLRLDAEIFSEDGADHVAGHVIVTDAGVVAALGHRLLAEAPPSIRRLFAT</sequence>
<name>HEM3_SPHAL</name>
<evidence type="ECO:0000255" key="1">
    <source>
        <dbReference type="HAMAP-Rule" id="MF_00260"/>
    </source>
</evidence>
<keyword id="KW-0627">Porphyrin biosynthesis</keyword>
<keyword id="KW-1185">Reference proteome</keyword>
<keyword id="KW-0808">Transferase</keyword>
<dbReference type="EC" id="2.5.1.61" evidence="1"/>
<dbReference type="EMBL" id="CP000356">
    <property type="protein sequence ID" value="ABF54581.1"/>
    <property type="molecule type" value="Genomic_DNA"/>
</dbReference>
<dbReference type="RefSeq" id="WP_011543145.1">
    <property type="nucleotide sequence ID" value="NC_008048.1"/>
</dbReference>
<dbReference type="SMR" id="Q1GP41"/>
<dbReference type="STRING" id="317655.Sala_2876"/>
<dbReference type="KEGG" id="sal:Sala_2876"/>
<dbReference type="eggNOG" id="COG0181">
    <property type="taxonomic scope" value="Bacteria"/>
</dbReference>
<dbReference type="HOGENOM" id="CLU_019704_1_0_5"/>
<dbReference type="OrthoDB" id="9810298at2"/>
<dbReference type="UniPathway" id="UPA00251">
    <property type="reaction ID" value="UER00319"/>
</dbReference>
<dbReference type="Proteomes" id="UP000006578">
    <property type="component" value="Chromosome"/>
</dbReference>
<dbReference type="GO" id="GO:0005737">
    <property type="term" value="C:cytoplasm"/>
    <property type="evidence" value="ECO:0007669"/>
    <property type="project" value="TreeGrafter"/>
</dbReference>
<dbReference type="GO" id="GO:0004418">
    <property type="term" value="F:hydroxymethylbilane synthase activity"/>
    <property type="evidence" value="ECO:0007669"/>
    <property type="project" value="UniProtKB-UniRule"/>
</dbReference>
<dbReference type="GO" id="GO:0006782">
    <property type="term" value="P:protoporphyrinogen IX biosynthetic process"/>
    <property type="evidence" value="ECO:0007669"/>
    <property type="project" value="UniProtKB-UniRule"/>
</dbReference>
<dbReference type="FunFam" id="3.40.190.10:FF:000005">
    <property type="entry name" value="Porphobilinogen deaminase"/>
    <property type="match status" value="1"/>
</dbReference>
<dbReference type="Gene3D" id="3.40.190.10">
    <property type="entry name" value="Periplasmic binding protein-like II"/>
    <property type="match status" value="2"/>
</dbReference>
<dbReference type="Gene3D" id="3.30.160.40">
    <property type="entry name" value="Porphobilinogen deaminase, C-terminal domain"/>
    <property type="match status" value="1"/>
</dbReference>
<dbReference type="HAMAP" id="MF_00260">
    <property type="entry name" value="Porphobil_deam"/>
    <property type="match status" value="1"/>
</dbReference>
<dbReference type="InterPro" id="IPR000860">
    <property type="entry name" value="HemC"/>
</dbReference>
<dbReference type="InterPro" id="IPR022419">
    <property type="entry name" value="Porphobilin_deaminase_cofac_BS"/>
</dbReference>
<dbReference type="InterPro" id="IPR022417">
    <property type="entry name" value="Porphobilin_deaminase_N"/>
</dbReference>
<dbReference type="InterPro" id="IPR022418">
    <property type="entry name" value="Porphobilinogen_deaminase_C"/>
</dbReference>
<dbReference type="InterPro" id="IPR036803">
    <property type="entry name" value="Porphobilinogen_deaminase_C_sf"/>
</dbReference>
<dbReference type="NCBIfam" id="TIGR00212">
    <property type="entry name" value="hemC"/>
    <property type="match status" value="1"/>
</dbReference>
<dbReference type="PANTHER" id="PTHR11557">
    <property type="entry name" value="PORPHOBILINOGEN DEAMINASE"/>
    <property type="match status" value="1"/>
</dbReference>
<dbReference type="PANTHER" id="PTHR11557:SF0">
    <property type="entry name" value="PORPHOBILINOGEN DEAMINASE"/>
    <property type="match status" value="1"/>
</dbReference>
<dbReference type="Pfam" id="PF01379">
    <property type="entry name" value="Porphobil_deam"/>
    <property type="match status" value="1"/>
</dbReference>
<dbReference type="Pfam" id="PF03900">
    <property type="entry name" value="Porphobil_deamC"/>
    <property type="match status" value="1"/>
</dbReference>
<dbReference type="PIRSF" id="PIRSF001438">
    <property type="entry name" value="4pyrrol_synth_OHMeBilane_synth"/>
    <property type="match status" value="1"/>
</dbReference>
<dbReference type="PRINTS" id="PR00151">
    <property type="entry name" value="PORPHBDMNASE"/>
</dbReference>
<dbReference type="SUPFAM" id="SSF53850">
    <property type="entry name" value="Periplasmic binding protein-like II"/>
    <property type="match status" value="1"/>
</dbReference>
<dbReference type="SUPFAM" id="SSF54782">
    <property type="entry name" value="Porphobilinogen deaminase (hydroxymethylbilane synthase), C-terminal domain"/>
    <property type="match status" value="1"/>
</dbReference>
<dbReference type="PROSITE" id="PS00533">
    <property type="entry name" value="PORPHOBILINOGEN_DEAM"/>
    <property type="match status" value="1"/>
</dbReference>
<protein>
    <recommendedName>
        <fullName evidence="1">Porphobilinogen deaminase</fullName>
        <shortName evidence="1">PBG</shortName>
        <ecNumber evidence="1">2.5.1.61</ecNumber>
    </recommendedName>
    <alternativeName>
        <fullName evidence="1">Hydroxymethylbilane synthase</fullName>
        <shortName evidence="1">HMBS</shortName>
    </alternativeName>
    <alternativeName>
        <fullName evidence="1">Pre-uroporphyrinogen synthase</fullName>
    </alternativeName>
</protein>
<comment type="function">
    <text evidence="1">Tetrapolymerization of the monopyrrole PBG into the hydroxymethylbilane pre-uroporphyrinogen in several discrete steps.</text>
</comment>
<comment type="catalytic activity">
    <reaction evidence="1">
        <text>4 porphobilinogen + H2O = hydroxymethylbilane + 4 NH4(+)</text>
        <dbReference type="Rhea" id="RHEA:13185"/>
        <dbReference type="ChEBI" id="CHEBI:15377"/>
        <dbReference type="ChEBI" id="CHEBI:28938"/>
        <dbReference type="ChEBI" id="CHEBI:57845"/>
        <dbReference type="ChEBI" id="CHEBI:58126"/>
        <dbReference type="EC" id="2.5.1.61"/>
    </reaction>
</comment>
<comment type="cofactor">
    <cofactor evidence="1">
        <name>dipyrromethane</name>
        <dbReference type="ChEBI" id="CHEBI:60342"/>
    </cofactor>
    <text evidence="1">Binds 1 dipyrromethane group covalently.</text>
</comment>
<comment type="pathway">
    <text evidence="1">Porphyrin-containing compound metabolism; protoporphyrin-IX biosynthesis; coproporphyrinogen-III from 5-aminolevulinate: step 2/4.</text>
</comment>
<comment type="subunit">
    <text evidence="1">Monomer.</text>
</comment>
<comment type="miscellaneous">
    <text evidence="1">The porphobilinogen subunits are added to the dipyrromethane group.</text>
</comment>
<comment type="similarity">
    <text evidence="1">Belongs to the HMBS family.</text>
</comment>
<proteinExistence type="inferred from homology"/>
<organism>
    <name type="scientific">Sphingopyxis alaskensis (strain DSM 13593 / LMG 18877 / RB2256)</name>
    <name type="common">Sphingomonas alaskensis</name>
    <dbReference type="NCBI Taxonomy" id="317655"/>
    <lineage>
        <taxon>Bacteria</taxon>
        <taxon>Pseudomonadati</taxon>
        <taxon>Pseudomonadota</taxon>
        <taxon>Alphaproteobacteria</taxon>
        <taxon>Sphingomonadales</taxon>
        <taxon>Sphingomonadaceae</taxon>
        <taxon>Sphingopyxis</taxon>
    </lineage>
</organism>
<accession>Q1GP41</accession>
<feature type="chain" id="PRO_1000047768" description="Porphobilinogen deaminase">
    <location>
        <begin position="1"/>
        <end position="315"/>
    </location>
</feature>
<feature type="modified residue" description="S-(dipyrrolylmethanemethyl)cysteine" evidence="1">
    <location>
        <position position="251"/>
    </location>
</feature>